<evidence type="ECO:0000255" key="1">
    <source>
        <dbReference type="HAMAP-Rule" id="MF_01326"/>
    </source>
</evidence>
<evidence type="ECO:0000305" key="2"/>
<gene>
    <name evidence="1" type="primary">rpl24</name>
    <name type="ordered locus">MmarC5_0168</name>
</gene>
<proteinExistence type="inferred from homology"/>
<reference key="1">
    <citation type="submission" date="2007-03" db="EMBL/GenBank/DDBJ databases">
        <title>Complete sequence of chromosome of Methanococcus maripaludis C5.</title>
        <authorList>
            <consortium name="US DOE Joint Genome Institute"/>
            <person name="Copeland A."/>
            <person name="Lucas S."/>
            <person name="Lapidus A."/>
            <person name="Barry K."/>
            <person name="Glavina del Rio T."/>
            <person name="Dalin E."/>
            <person name="Tice H."/>
            <person name="Pitluck S."/>
            <person name="Chertkov O."/>
            <person name="Brettin T."/>
            <person name="Bruce D."/>
            <person name="Han C."/>
            <person name="Detter J.C."/>
            <person name="Schmutz J."/>
            <person name="Larimer F."/>
            <person name="Land M."/>
            <person name="Hauser L."/>
            <person name="Kyrpides N."/>
            <person name="Mikhailova N."/>
            <person name="Sieprawska-Lupa M."/>
            <person name="Whitman W.B."/>
            <person name="Richardson P."/>
        </authorList>
    </citation>
    <scope>NUCLEOTIDE SEQUENCE [LARGE SCALE GENOMIC DNA]</scope>
    <source>
        <strain>C5 / ATCC BAA-1333</strain>
    </source>
</reference>
<keyword id="KW-0687">Ribonucleoprotein</keyword>
<keyword id="KW-0689">Ribosomal protein</keyword>
<keyword id="KW-0694">RNA-binding</keyword>
<keyword id="KW-0699">rRNA-binding</keyword>
<name>RL24_METM5</name>
<sequence length="119" mass="13409">MVLTNSKQPRKQRKALYNAPLHLRNSVMAAMLSKELKEKFNKNSLPVKKGDTVKVLRGNFKGIEGEVSKVDYAGYKIIVEGVVNKKQDGTETAYPIHPSNVMITKLDESDEKRFKNSSN</sequence>
<feature type="chain" id="PRO_1000052251" description="Large ribosomal subunit protein uL24">
    <location>
        <begin position="1"/>
        <end position="119"/>
    </location>
</feature>
<dbReference type="EMBL" id="CP000609">
    <property type="protein sequence ID" value="ABO34485.1"/>
    <property type="molecule type" value="Genomic_DNA"/>
</dbReference>
<dbReference type="RefSeq" id="WP_011867944.1">
    <property type="nucleotide sequence ID" value="NC_009135.1"/>
</dbReference>
<dbReference type="SMR" id="A4FWB0"/>
<dbReference type="STRING" id="402880.MmarC5_0168"/>
<dbReference type="GeneID" id="4928528"/>
<dbReference type="KEGG" id="mmq:MmarC5_0168"/>
<dbReference type="eggNOG" id="arCOG04094">
    <property type="taxonomic scope" value="Archaea"/>
</dbReference>
<dbReference type="HOGENOM" id="CLU_093240_2_1_2"/>
<dbReference type="OrthoDB" id="10899at2157"/>
<dbReference type="Proteomes" id="UP000000253">
    <property type="component" value="Chromosome"/>
</dbReference>
<dbReference type="GO" id="GO:0015934">
    <property type="term" value="C:large ribosomal subunit"/>
    <property type="evidence" value="ECO:0007669"/>
    <property type="project" value="InterPro"/>
</dbReference>
<dbReference type="GO" id="GO:0019843">
    <property type="term" value="F:rRNA binding"/>
    <property type="evidence" value="ECO:0007669"/>
    <property type="project" value="UniProtKB-UniRule"/>
</dbReference>
<dbReference type="GO" id="GO:0003735">
    <property type="term" value="F:structural constituent of ribosome"/>
    <property type="evidence" value="ECO:0007669"/>
    <property type="project" value="InterPro"/>
</dbReference>
<dbReference type="GO" id="GO:0006412">
    <property type="term" value="P:translation"/>
    <property type="evidence" value="ECO:0007669"/>
    <property type="project" value="UniProtKB-UniRule"/>
</dbReference>
<dbReference type="CDD" id="cd06089">
    <property type="entry name" value="KOW_RPL26"/>
    <property type="match status" value="1"/>
</dbReference>
<dbReference type="Gene3D" id="2.30.30.30">
    <property type="match status" value="1"/>
</dbReference>
<dbReference type="HAMAP" id="MF_01326_A">
    <property type="entry name" value="Ribosomal_uL24_A"/>
    <property type="match status" value="1"/>
</dbReference>
<dbReference type="InterPro" id="IPR005824">
    <property type="entry name" value="KOW"/>
</dbReference>
<dbReference type="InterPro" id="IPR014722">
    <property type="entry name" value="Rib_uL2_dom2"/>
</dbReference>
<dbReference type="InterPro" id="IPR005825">
    <property type="entry name" value="Ribosomal_uL24_CS"/>
</dbReference>
<dbReference type="InterPro" id="IPR005756">
    <property type="entry name" value="Ribosomal_uL24_euk/arc"/>
</dbReference>
<dbReference type="InterPro" id="IPR041988">
    <property type="entry name" value="Ribosomal_uL24_KOW"/>
</dbReference>
<dbReference type="InterPro" id="IPR008991">
    <property type="entry name" value="Translation_prot_SH3-like_sf"/>
</dbReference>
<dbReference type="NCBIfam" id="TIGR01080">
    <property type="entry name" value="rplX_A_E"/>
    <property type="match status" value="1"/>
</dbReference>
<dbReference type="PANTHER" id="PTHR11143">
    <property type="entry name" value="60S RIBOSOMAL PROTEIN L26 FAMILY MEMBER"/>
    <property type="match status" value="1"/>
</dbReference>
<dbReference type="Pfam" id="PF00467">
    <property type="entry name" value="KOW"/>
    <property type="match status" value="1"/>
</dbReference>
<dbReference type="Pfam" id="PF16906">
    <property type="entry name" value="Ribosomal_L26"/>
    <property type="match status" value="1"/>
</dbReference>
<dbReference type="SMART" id="SM00739">
    <property type="entry name" value="KOW"/>
    <property type="match status" value="1"/>
</dbReference>
<dbReference type="SUPFAM" id="SSF50104">
    <property type="entry name" value="Translation proteins SH3-like domain"/>
    <property type="match status" value="1"/>
</dbReference>
<dbReference type="PROSITE" id="PS01108">
    <property type="entry name" value="RIBOSOMAL_L24"/>
    <property type="match status" value="1"/>
</dbReference>
<protein>
    <recommendedName>
        <fullName evidence="1">Large ribosomal subunit protein uL24</fullName>
    </recommendedName>
    <alternativeName>
        <fullName evidence="2">50S ribosomal protein L24</fullName>
    </alternativeName>
</protein>
<organism>
    <name type="scientific">Methanococcus maripaludis (strain C5 / ATCC BAA-1333)</name>
    <dbReference type="NCBI Taxonomy" id="402880"/>
    <lineage>
        <taxon>Archaea</taxon>
        <taxon>Methanobacteriati</taxon>
        <taxon>Methanobacteriota</taxon>
        <taxon>Methanomada group</taxon>
        <taxon>Methanococci</taxon>
        <taxon>Methanococcales</taxon>
        <taxon>Methanococcaceae</taxon>
        <taxon>Methanococcus</taxon>
    </lineage>
</organism>
<accession>A4FWB0</accession>
<comment type="function">
    <text evidence="1">One of two assembly initiator proteins, it binds directly to the 5'-end of the 23S rRNA, where it nucleates assembly of the 50S subunit.</text>
</comment>
<comment type="function">
    <text evidence="1">Located at the polypeptide exit tunnel on the outside of the subunit.</text>
</comment>
<comment type="subunit">
    <text evidence="1">Part of the 50S ribosomal subunit.</text>
</comment>
<comment type="similarity">
    <text evidence="1">Belongs to the universal ribosomal protein uL24 family.</text>
</comment>